<proteinExistence type="inferred from homology"/>
<protein>
    <recommendedName>
        <fullName>Signal transduction histidine-protein kinase/phosphatase MprB</fullName>
        <ecNumber>2.7.13.3</ecNumber>
        <ecNumber>3.1.3.-</ecNumber>
    </recommendedName>
    <alternativeName>
        <fullName>Mycobacterial persistence regulator B</fullName>
    </alternativeName>
</protein>
<evidence type="ECO:0000250" key="1"/>
<evidence type="ECO:0000255" key="2"/>
<evidence type="ECO:0000255" key="3">
    <source>
        <dbReference type="PROSITE-ProRule" id="PRU00102"/>
    </source>
</evidence>
<evidence type="ECO:0000255" key="4">
    <source>
        <dbReference type="PROSITE-ProRule" id="PRU00107"/>
    </source>
</evidence>
<evidence type="ECO:0000256" key="5">
    <source>
        <dbReference type="SAM" id="MobiDB-lite"/>
    </source>
</evidence>
<evidence type="ECO:0000305" key="6"/>
<keyword id="KW-0067">ATP-binding</keyword>
<keyword id="KW-1003">Cell membrane</keyword>
<keyword id="KW-0378">Hydrolase</keyword>
<keyword id="KW-0418">Kinase</keyword>
<keyword id="KW-0460">Magnesium</keyword>
<keyword id="KW-0464">Manganese</keyword>
<keyword id="KW-0472">Membrane</keyword>
<keyword id="KW-0547">Nucleotide-binding</keyword>
<keyword id="KW-0597">Phosphoprotein</keyword>
<keyword id="KW-0904">Protein phosphatase</keyword>
<keyword id="KW-0346">Stress response</keyword>
<keyword id="KW-0808">Transferase</keyword>
<keyword id="KW-0812">Transmembrane</keyword>
<keyword id="KW-1133">Transmembrane helix</keyword>
<keyword id="KW-0902">Two-component regulatory system</keyword>
<keyword id="KW-0843">Virulence</keyword>
<accession>A1UL69</accession>
<sequence length="515" mass="55011">MTLPPPPSRLKPPRNTSSLSLRWRVMLLAMSMVAMVVVLMSVAVYAVVSRALYDDIDNQLHSRARLLIESGSLAADPGKAIEGTAYSDVNAMLVNPGRSIYTANQQGQTLPLGEAEKDVISGELLLSLRTANHQRILAVHLTNGSSLLISKSLAPTGQVLGRLGTVLLIVGGVGVAVAAIAGGMVARAGLRPVGRLTQAAERVARTDDLRPIPVFGSDELARLTEAFNMMLRALTESRERQARLVSDAGHELRTPLTSLRTNVELLMASQAPGAPRLPEEEMAGLRADVIAQIEELSTLVGDLVDLTRDEAGGVVYETVDMAEVVDRSLERVRRRRNDIEFDVNVVGWQVYGDAAGLARAVLNLLDNAAKWSPPGGRVGVRLTQTDPVHAELVVSDQGPGIPEAERRLVFERFYRSTAARAMPGSGLGLAIVKQVVLKHGGALRVEDTVPGGNPPGTSFYVMLPGRPLTPGGNGTAPVPAAQFDPDMRSAGSRADRRVIKNTETNGKSRSASKEL</sequence>
<organism>
    <name type="scientific">Mycobacterium sp. (strain KMS)</name>
    <dbReference type="NCBI Taxonomy" id="189918"/>
    <lineage>
        <taxon>Bacteria</taxon>
        <taxon>Bacillati</taxon>
        <taxon>Actinomycetota</taxon>
        <taxon>Actinomycetes</taxon>
        <taxon>Mycobacteriales</taxon>
        <taxon>Mycobacteriaceae</taxon>
        <taxon>Mycobacterium</taxon>
    </lineage>
</organism>
<comment type="function">
    <text evidence="1">Member of the two-component regulatory system MprB/MprA which contributes to maintaining a balance among several systems involved in stress resistance and is required for establishment and maintenance of persistent infection in the host. In response to environmental signals MprB acts both as a membrane-associated protein kinase that undergoes autophosphorylation and subsequently transfers the phosphate to MprA, and a protein phosphatase that dephosphorylates phospho-MprA (By similarity).</text>
</comment>
<comment type="catalytic activity">
    <reaction>
        <text>ATP + protein L-histidine = ADP + protein N-phospho-L-histidine.</text>
        <dbReference type="EC" id="2.7.13.3"/>
    </reaction>
</comment>
<comment type="cofactor">
    <cofactor evidence="1">
        <name>Mg(2+)</name>
        <dbReference type="ChEBI" id="CHEBI:18420"/>
    </cofactor>
    <cofactor evidence="1">
        <name>Mn(2+)</name>
        <dbReference type="ChEBI" id="CHEBI:29035"/>
    </cofactor>
</comment>
<comment type="subcellular location">
    <subcellularLocation>
        <location evidence="6">Cell membrane</location>
        <topology evidence="6">Multi-pass membrane protein</topology>
    </subcellularLocation>
</comment>
<comment type="PTM">
    <text evidence="1">Autophosphorylated.</text>
</comment>
<feature type="chain" id="PRO_0000308438" description="Signal transduction histidine-protein kinase/phosphatase MprB">
    <location>
        <begin position="1"/>
        <end position="515"/>
    </location>
</feature>
<feature type="topological domain" description="Cytoplasmic" evidence="2">
    <location>
        <begin position="1"/>
        <end position="24"/>
    </location>
</feature>
<feature type="transmembrane region" description="Helical" evidence="2">
    <location>
        <begin position="25"/>
        <end position="45"/>
    </location>
</feature>
<feature type="topological domain" description="Extracellular" evidence="2">
    <location>
        <begin position="46"/>
        <end position="165"/>
    </location>
</feature>
<feature type="transmembrane region" description="Helical" evidence="2">
    <location>
        <begin position="166"/>
        <end position="186"/>
    </location>
</feature>
<feature type="topological domain" description="Cytoplasmic" evidence="2">
    <location>
        <begin position="187"/>
        <end position="515"/>
    </location>
</feature>
<feature type="domain" description="HAMP" evidence="3">
    <location>
        <begin position="187"/>
        <end position="239"/>
    </location>
</feature>
<feature type="domain" description="Histidine kinase" evidence="4">
    <location>
        <begin position="247"/>
        <end position="467"/>
    </location>
</feature>
<feature type="region of interest" description="Disordered" evidence="5">
    <location>
        <begin position="468"/>
        <end position="515"/>
    </location>
</feature>
<feature type="modified residue" description="Phosphohistidine; by autocatalysis" evidence="4">
    <location>
        <position position="250"/>
    </location>
</feature>
<name>MPRB_MYCSK</name>
<reference key="1">
    <citation type="submission" date="2006-12" db="EMBL/GenBank/DDBJ databases">
        <title>Complete sequence of chromosome of Mycobacterium sp. KMS.</title>
        <authorList>
            <consortium name="US DOE Joint Genome Institute"/>
            <person name="Copeland A."/>
            <person name="Lucas S."/>
            <person name="Lapidus A."/>
            <person name="Barry K."/>
            <person name="Detter J.C."/>
            <person name="Glavina del Rio T."/>
            <person name="Hammon N."/>
            <person name="Israni S."/>
            <person name="Dalin E."/>
            <person name="Tice H."/>
            <person name="Pitluck S."/>
            <person name="Kiss H."/>
            <person name="Brettin T."/>
            <person name="Bruce D."/>
            <person name="Han C."/>
            <person name="Tapia R."/>
            <person name="Gilna P."/>
            <person name="Schmutz J."/>
            <person name="Larimer F."/>
            <person name="Land M."/>
            <person name="Hauser L."/>
            <person name="Kyrpides N."/>
            <person name="Mikhailova N."/>
            <person name="Miller C.D."/>
            <person name="Richardson P."/>
        </authorList>
    </citation>
    <scope>NUCLEOTIDE SEQUENCE [LARGE SCALE GENOMIC DNA]</scope>
    <source>
        <strain>KMS</strain>
    </source>
</reference>
<gene>
    <name type="primary">mprB</name>
    <name type="ordered locus">Mkms_4386</name>
</gene>
<dbReference type="EC" id="2.7.13.3"/>
<dbReference type="EC" id="3.1.3.-"/>
<dbReference type="EMBL" id="CP000518">
    <property type="protein sequence ID" value="ABL93577.1"/>
    <property type="molecule type" value="Genomic_DNA"/>
</dbReference>
<dbReference type="SMR" id="A1UL69"/>
<dbReference type="STRING" id="189918.Mkms_4386"/>
<dbReference type="KEGG" id="mkm:Mkms_4386"/>
<dbReference type="HOGENOM" id="CLU_000445_89_6_11"/>
<dbReference type="OrthoDB" id="9786919at2"/>
<dbReference type="GO" id="GO:0005886">
    <property type="term" value="C:plasma membrane"/>
    <property type="evidence" value="ECO:0007669"/>
    <property type="project" value="UniProtKB-SubCell"/>
</dbReference>
<dbReference type="GO" id="GO:0005524">
    <property type="term" value="F:ATP binding"/>
    <property type="evidence" value="ECO:0007669"/>
    <property type="project" value="UniProtKB-KW"/>
</dbReference>
<dbReference type="GO" id="GO:0004721">
    <property type="term" value="F:phosphoprotein phosphatase activity"/>
    <property type="evidence" value="ECO:0007669"/>
    <property type="project" value="UniProtKB-KW"/>
</dbReference>
<dbReference type="GO" id="GO:0000155">
    <property type="term" value="F:phosphorelay sensor kinase activity"/>
    <property type="evidence" value="ECO:0007669"/>
    <property type="project" value="InterPro"/>
</dbReference>
<dbReference type="CDD" id="cd06225">
    <property type="entry name" value="HAMP"/>
    <property type="match status" value="1"/>
</dbReference>
<dbReference type="CDD" id="cd00075">
    <property type="entry name" value="HATPase"/>
    <property type="match status" value="1"/>
</dbReference>
<dbReference type="CDD" id="cd00082">
    <property type="entry name" value="HisKA"/>
    <property type="match status" value="1"/>
</dbReference>
<dbReference type="FunFam" id="3.30.565.10:FF:000066">
    <property type="entry name" value="Two-component sensor kinase MprB"/>
    <property type="match status" value="1"/>
</dbReference>
<dbReference type="Gene3D" id="1.10.287.130">
    <property type="match status" value="1"/>
</dbReference>
<dbReference type="Gene3D" id="6.10.340.10">
    <property type="match status" value="1"/>
</dbReference>
<dbReference type="Gene3D" id="3.30.565.10">
    <property type="entry name" value="Histidine kinase-like ATPase, C-terminal domain"/>
    <property type="match status" value="1"/>
</dbReference>
<dbReference type="InterPro" id="IPR050980">
    <property type="entry name" value="2C_sensor_his_kinase"/>
</dbReference>
<dbReference type="InterPro" id="IPR003660">
    <property type="entry name" value="HAMP_dom"/>
</dbReference>
<dbReference type="InterPro" id="IPR036890">
    <property type="entry name" value="HATPase_C_sf"/>
</dbReference>
<dbReference type="InterPro" id="IPR005467">
    <property type="entry name" value="His_kinase_dom"/>
</dbReference>
<dbReference type="InterPro" id="IPR003661">
    <property type="entry name" value="HisK_dim/P_dom"/>
</dbReference>
<dbReference type="InterPro" id="IPR036097">
    <property type="entry name" value="HisK_dim/P_sf"/>
</dbReference>
<dbReference type="InterPro" id="IPR004358">
    <property type="entry name" value="Sig_transdc_His_kin-like_C"/>
</dbReference>
<dbReference type="PANTHER" id="PTHR44936">
    <property type="entry name" value="SENSOR PROTEIN CREC"/>
    <property type="match status" value="1"/>
</dbReference>
<dbReference type="PANTHER" id="PTHR44936:SF9">
    <property type="entry name" value="SENSOR PROTEIN CREC"/>
    <property type="match status" value="1"/>
</dbReference>
<dbReference type="Pfam" id="PF00672">
    <property type="entry name" value="HAMP"/>
    <property type="match status" value="1"/>
</dbReference>
<dbReference type="Pfam" id="PF02518">
    <property type="entry name" value="HATPase_c"/>
    <property type="match status" value="1"/>
</dbReference>
<dbReference type="Pfam" id="PF00512">
    <property type="entry name" value="HisKA"/>
    <property type="match status" value="1"/>
</dbReference>
<dbReference type="PRINTS" id="PR00344">
    <property type="entry name" value="BCTRLSENSOR"/>
</dbReference>
<dbReference type="SMART" id="SM00304">
    <property type="entry name" value="HAMP"/>
    <property type="match status" value="1"/>
</dbReference>
<dbReference type="SMART" id="SM00387">
    <property type="entry name" value="HATPase_c"/>
    <property type="match status" value="1"/>
</dbReference>
<dbReference type="SMART" id="SM00388">
    <property type="entry name" value="HisKA"/>
    <property type="match status" value="1"/>
</dbReference>
<dbReference type="SUPFAM" id="SSF55874">
    <property type="entry name" value="ATPase domain of HSP90 chaperone/DNA topoisomerase II/histidine kinase"/>
    <property type="match status" value="1"/>
</dbReference>
<dbReference type="SUPFAM" id="SSF158472">
    <property type="entry name" value="HAMP domain-like"/>
    <property type="match status" value="1"/>
</dbReference>
<dbReference type="SUPFAM" id="SSF47384">
    <property type="entry name" value="Homodimeric domain of signal transducing histidine kinase"/>
    <property type="match status" value="1"/>
</dbReference>
<dbReference type="PROSITE" id="PS50885">
    <property type="entry name" value="HAMP"/>
    <property type="match status" value="1"/>
</dbReference>
<dbReference type="PROSITE" id="PS50109">
    <property type="entry name" value="HIS_KIN"/>
    <property type="match status" value="1"/>
</dbReference>